<keyword id="KW-0963">Cytoplasm</keyword>
<keyword id="KW-0238">DNA-binding</keyword>
<keyword id="KW-0240">DNA-directed RNA polymerase</keyword>
<keyword id="KW-0548">Nucleotidyltransferase</keyword>
<keyword id="KW-1185">Reference proteome</keyword>
<keyword id="KW-0804">Transcription</keyword>
<keyword id="KW-0808">Transferase</keyword>
<accession>P0CX07</accession>
<accession>P15354</accession>
<accession>Q9HM80</accession>
<organism>
    <name type="scientific">Halobacterium salinarum (strain ATCC 700922 / JCM 11081 / NRC-1)</name>
    <name type="common">Halobacterium halobium</name>
    <dbReference type="NCBI Taxonomy" id="64091"/>
    <lineage>
        <taxon>Archaea</taxon>
        <taxon>Methanobacteriati</taxon>
        <taxon>Methanobacteriota</taxon>
        <taxon>Stenosarchaea group</taxon>
        <taxon>Halobacteria</taxon>
        <taxon>Halobacteriales</taxon>
        <taxon>Halobacteriaceae</taxon>
        <taxon>Halobacterium</taxon>
        <taxon>Halobacterium salinarum NRC-34001</taxon>
    </lineage>
</organism>
<evidence type="ECO:0000250" key="1"/>
<evidence type="ECO:0000255" key="2">
    <source>
        <dbReference type="HAMAP-Rule" id="MF_00411"/>
    </source>
</evidence>
<evidence type="ECO:0000303" key="3">
    <source>
    </source>
</evidence>
<feature type="initiator methionine" description="Removed" evidence="1">
    <location>
        <position position="1"/>
    </location>
</feature>
<feature type="chain" id="PRO_0000074013" description="DNA-directed RNA polymerase subunit Rpo1C">
    <location>
        <begin position="2"/>
        <end position="397"/>
    </location>
</feature>
<sequence>MTEFDVTDGVHDVIEDTELPRRLKDEVLATAEERGVTKSQANEIATAVEAQYLDTRVDPLDPVGTVSAQSIGEPGTQMTMNTFHYAGVAEMDVTQGLPRLIELVDARKTPDTPVMEVYLEDEYAEERERAHEVVWKIEATKILALGDISTNVADMVVRIDLNEDTLQERWPRVDSTTQIAGEVAETIEGNLGVTVTQDGTILEFGPSEPSYRELLQLVEQLRDIVFKGIEEVSRVVIRREETERGEEFVLYTEGSAFKKALKIEGVDATRTSCNNIHEVHKTLGIEAAREAIINETMTTLEEQGLDDVNIRHLMLVADIMTNDGTIESIGRHGISGNKNSVLARAAFEVTVNHLLDAAIHGESDDLDGVIENVIVGKPVRLGTGDVDLRMGATQTSD</sequence>
<proteinExistence type="inferred from homology"/>
<comment type="function">
    <text evidence="2">DNA-dependent RNA polymerase (RNAP) catalyzes the transcription of DNA into RNA using the four ribonucleoside triphosphates as substrates. Forms part of the jaw domain.</text>
</comment>
<comment type="catalytic activity">
    <reaction evidence="2">
        <text>RNA(n) + a ribonucleoside 5'-triphosphate = RNA(n+1) + diphosphate</text>
        <dbReference type="Rhea" id="RHEA:21248"/>
        <dbReference type="Rhea" id="RHEA-COMP:14527"/>
        <dbReference type="Rhea" id="RHEA-COMP:17342"/>
        <dbReference type="ChEBI" id="CHEBI:33019"/>
        <dbReference type="ChEBI" id="CHEBI:61557"/>
        <dbReference type="ChEBI" id="CHEBI:140395"/>
        <dbReference type="EC" id="2.7.7.6"/>
    </reaction>
</comment>
<comment type="subunit">
    <text evidence="2">Part of the RNA polymerase complex.</text>
</comment>
<comment type="subcellular location">
    <subcellularLocation>
        <location evidence="2">Cytoplasm</location>
    </subcellularLocation>
</comment>
<comment type="similarity">
    <text evidence="2">Belongs to the RNA polymerase beta' chain family.</text>
</comment>
<reference key="1">
    <citation type="journal article" date="2000" name="Proc. Natl. Acad. Sci. U.S.A.">
        <title>Genome sequence of Halobacterium species NRC-1.</title>
        <authorList>
            <person name="Ng W.V."/>
            <person name="Kennedy S.P."/>
            <person name="Mahairas G.G."/>
            <person name="Berquist B."/>
            <person name="Pan M."/>
            <person name="Shukla H.D."/>
            <person name="Lasky S.R."/>
            <person name="Baliga N.S."/>
            <person name="Thorsson V."/>
            <person name="Sbrogna J."/>
            <person name="Swartzell S."/>
            <person name="Weir D."/>
            <person name="Hall J."/>
            <person name="Dahl T.A."/>
            <person name="Welti R."/>
            <person name="Goo Y.A."/>
            <person name="Leithauser B."/>
            <person name="Keller K."/>
            <person name="Cruz R."/>
            <person name="Danson M.J."/>
            <person name="Hough D.W."/>
            <person name="Maddocks D.G."/>
            <person name="Jablonski P.E."/>
            <person name="Krebs M.P."/>
            <person name="Angevine C.M."/>
            <person name="Dale H."/>
            <person name="Isenbarger T.A."/>
            <person name="Peck R.F."/>
            <person name="Pohlschroder M."/>
            <person name="Spudich J.L."/>
            <person name="Jung K.-H."/>
            <person name="Alam M."/>
            <person name="Freitas T."/>
            <person name="Hou S."/>
            <person name="Daniels C.J."/>
            <person name="Dennis P.P."/>
            <person name="Omer A.D."/>
            <person name="Ebhardt H."/>
            <person name="Lowe T.M."/>
            <person name="Liang P."/>
            <person name="Riley M."/>
            <person name="Hood L."/>
            <person name="DasSarma S."/>
        </authorList>
    </citation>
    <scope>NUCLEOTIDE SEQUENCE [LARGE SCALE GENOMIC DNA]</scope>
    <source>
        <strain>ATCC 700922 / JCM 11081 / NRC-1</strain>
    </source>
</reference>
<gene>
    <name evidence="2" type="primary">rpo1C</name>
    <name evidence="2" type="synonym">rpoA2</name>
    <name evidence="3" type="synonym">rpoC</name>
    <name type="ordered locus">VNG_2662G</name>
</gene>
<name>RPO1C_HALSA</name>
<dbReference type="EC" id="2.7.7.6" evidence="2"/>
<dbReference type="EMBL" id="AE004437">
    <property type="protein sequence ID" value="AAG20691.1"/>
    <property type="molecule type" value="Genomic_DNA"/>
</dbReference>
<dbReference type="PIR" id="G84415">
    <property type="entry name" value="G84415"/>
</dbReference>
<dbReference type="RefSeq" id="WP_010903995.1">
    <property type="nucleotide sequence ID" value="NC_002607.1"/>
</dbReference>
<dbReference type="SMR" id="P0CX07"/>
<dbReference type="STRING" id="64091.VNG_2662G"/>
<dbReference type="PaxDb" id="64091-VNG_2662G"/>
<dbReference type="GeneID" id="68695143"/>
<dbReference type="KEGG" id="hal:VNG_2662G"/>
<dbReference type="PATRIC" id="fig|64091.14.peg.2068"/>
<dbReference type="HOGENOM" id="CLU_037097_1_0_2"/>
<dbReference type="InParanoid" id="P0CX07"/>
<dbReference type="OrthoDB" id="372142at2157"/>
<dbReference type="PhylomeDB" id="P0CX07"/>
<dbReference type="Proteomes" id="UP000000554">
    <property type="component" value="Chromosome"/>
</dbReference>
<dbReference type="GO" id="GO:0005737">
    <property type="term" value="C:cytoplasm"/>
    <property type="evidence" value="ECO:0007669"/>
    <property type="project" value="UniProtKB-SubCell"/>
</dbReference>
<dbReference type="GO" id="GO:0000428">
    <property type="term" value="C:DNA-directed RNA polymerase complex"/>
    <property type="evidence" value="ECO:0007669"/>
    <property type="project" value="UniProtKB-KW"/>
</dbReference>
<dbReference type="GO" id="GO:0003677">
    <property type="term" value="F:DNA binding"/>
    <property type="evidence" value="ECO:0007669"/>
    <property type="project" value="UniProtKB-UniRule"/>
</dbReference>
<dbReference type="GO" id="GO:0003899">
    <property type="term" value="F:DNA-directed RNA polymerase activity"/>
    <property type="evidence" value="ECO:0007669"/>
    <property type="project" value="UniProtKB-UniRule"/>
</dbReference>
<dbReference type="GO" id="GO:0006351">
    <property type="term" value="P:DNA-templated transcription"/>
    <property type="evidence" value="ECO:0007669"/>
    <property type="project" value="UniProtKB-UniRule"/>
</dbReference>
<dbReference type="CDD" id="cd06528">
    <property type="entry name" value="RNAP_A"/>
    <property type="match status" value="1"/>
</dbReference>
<dbReference type="Gene3D" id="1.10.150.390">
    <property type="match status" value="1"/>
</dbReference>
<dbReference type="HAMAP" id="MF_00411">
    <property type="entry name" value="RNApol_arch_Rpo1C"/>
    <property type="match status" value="1"/>
</dbReference>
<dbReference type="InterPro" id="IPR045867">
    <property type="entry name" value="DNA-dir_RpoC_beta_prime"/>
</dbReference>
<dbReference type="InterPro" id="IPR007081">
    <property type="entry name" value="RNA_pol_Rpb1_5"/>
</dbReference>
<dbReference type="InterPro" id="IPR012757">
    <property type="entry name" value="RPO1C"/>
</dbReference>
<dbReference type="NCBIfam" id="TIGR02389">
    <property type="entry name" value="RNA_pol_rpoA2"/>
    <property type="match status" value="1"/>
</dbReference>
<dbReference type="PANTHER" id="PTHR19376">
    <property type="entry name" value="DNA-DIRECTED RNA POLYMERASE"/>
    <property type="match status" value="1"/>
</dbReference>
<dbReference type="PANTHER" id="PTHR19376:SF32">
    <property type="entry name" value="DNA-DIRECTED RNA POLYMERASE III SUBUNIT RPC1"/>
    <property type="match status" value="1"/>
</dbReference>
<dbReference type="Pfam" id="PF04998">
    <property type="entry name" value="RNA_pol_Rpb1_5"/>
    <property type="match status" value="1"/>
</dbReference>
<dbReference type="SUPFAM" id="SSF64484">
    <property type="entry name" value="beta and beta-prime subunits of DNA dependent RNA-polymerase"/>
    <property type="match status" value="1"/>
</dbReference>
<protein>
    <recommendedName>
        <fullName evidence="2">DNA-directed RNA polymerase subunit Rpo1C</fullName>
        <ecNumber evidence="2">2.7.7.6</ecNumber>
    </recommendedName>
    <alternativeName>
        <fullName evidence="2">DNA-directed RNA polymerase subunit A''</fullName>
    </alternativeName>
</protein>